<dbReference type="SMR" id="P58446"/>
<dbReference type="GO" id="GO:0006952">
    <property type="term" value="P:defense response"/>
    <property type="evidence" value="ECO:0000314"/>
    <property type="project" value="UniProtKB"/>
</dbReference>
<dbReference type="InterPro" id="IPR005535">
    <property type="entry name" value="Cyclotide"/>
</dbReference>
<dbReference type="InterPro" id="IPR012324">
    <property type="entry name" value="Cyclotide_moebius_CS"/>
</dbReference>
<dbReference type="InterPro" id="IPR036146">
    <property type="entry name" value="Cyclotide_sf"/>
</dbReference>
<dbReference type="Pfam" id="PF03784">
    <property type="entry name" value="Cyclotide"/>
    <property type="match status" value="1"/>
</dbReference>
<dbReference type="PIRSF" id="PIRSF037891">
    <property type="entry name" value="Cycloviolacin"/>
    <property type="match status" value="1"/>
</dbReference>
<dbReference type="SUPFAM" id="SSF57038">
    <property type="entry name" value="Cyclotides"/>
    <property type="match status" value="1"/>
</dbReference>
<dbReference type="PROSITE" id="PS51052">
    <property type="entry name" value="CYCLOTIDE"/>
    <property type="match status" value="1"/>
</dbReference>
<dbReference type="PROSITE" id="PS60009">
    <property type="entry name" value="CYCLOTIDE_MOEBIUS"/>
    <property type="match status" value="1"/>
</dbReference>
<evidence type="ECO:0000255" key="1">
    <source>
        <dbReference type="PROSITE-ProRule" id="PRU00395"/>
    </source>
</evidence>
<evidence type="ECO:0000269" key="2">
    <source>
    </source>
</evidence>
<evidence type="ECO:0000269" key="3">
    <source>
    </source>
</evidence>
<evidence type="ECO:0000305" key="4"/>
<comment type="function">
    <text evidence="1 2 3">Probably participates in a plant defense mechanism. Has cytotoxic activity against a variety of drug-resistant and drug-sensitive human tumor cell lines, and against primary chronic lymphocytic leukemia cells. Has weak cytotoxic activity against primary ovarian carcinoma cells or normal lymphocytes.</text>
</comment>
<comment type="domain">
    <text>The presence of a 'disulfide through disulfide knot' structurally defines this protein as a knottin.</text>
</comment>
<comment type="PTM">
    <text>This is a cyclic peptide.</text>
</comment>
<comment type="mass spectrometry" mass="2878.0" method="Electrospray" evidence="3"/>
<comment type="similarity">
    <text evidence="1">Belongs to the cyclotide family. Moebius subfamily.</text>
</comment>
<comment type="caution">
    <text evidence="4">This peptide is cyclic. The start position was chosen by similarity to OAK1 (kalata-B1) for which the DNA sequence is known.</text>
</comment>
<keyword id="KW-0903">Direct protein sequencing</keyword>
<keyword id="KW-1015">Disulfide bond</keyword>
<keyword id="KW-0960">Knottin</keyword>
<keyword id="KW-0611">Plant defense</keyword>
<protein>
    <recommendedName>
        <fullName>Varv peptide A</fullName>
    </recommendedName>
</protein>
<reference key="1">
    <citation type="journal article" date="1998" name="J. Nat. Prod.">
        <title>Fractionation protocol for the isolation of polypeptides from plant biomass.</title>
        <authorList>
            <person name="Claeson P."/>
            <person name="Goeransson U."/>
            <person name="Johansson S."/>
            <person name="Luijendijk T."/>
            <person name="Bohlin L."/>
        </authorList>
    </citation>
    <scope>PROTEIN SEQUENCE</scope>
</reference>
<reference key="2">
    <citation type="journal article" date="2004" name="J. Nat. Prod.">
        <title>Cytotoxic cyclotides from Viola tricolor.</title>
        <authorList>
            <person name="Svangard E."/>
            <person name="Goransson U."/>
            <person name="Hocaoglu Z."/>
            <person name="Gullbo J."/>
            <person name="Larsson R."/>
            <person name="Claeson P."/>
            <person name="Bohlin L."/>
        </authorList>
    </citation>
    <scope>PROTEIN SEQUENCE</scope>
    <scope>FUNCTION</scope>
    <scope>MASS SPECTROMETRY</scope>
</reference>
<reference key="3">
    <citation type="journal article" date="2002" name="Mol. Cancer Ther.">
        <title>Cyclotides: a novel type of cytotoxic agents.</title>
        <authorList>
            <person name="Lindholm P."/>
            <person name="Goransson U."/>
            <person name="Johansson S."/>
            <person name="Claeson P."/>
            <person name="Gullbo J."/>
            <person name="Larsson R."/>
            <person name="Bohlin L."/>
            <person name="Backlund A."/>
        </authorList>
    </citation>
    <scope>FUNCTION</scope>
</reference>
<name>VARA_VIOAR</name>
<accession>P58446</accession>
<organism>
    <name type="scientific">Viola arvensis</name>
    <name type="common">European field pansy</name>
    <name type="synonym">Field violet</name>
    <dbReference type="NCBI Taxonomy" id="97415"/>
    <lineage>
        <taxon>Eukaryota</taxon>
        <taxon>Viridiplantae</taxon>
        <taxon>Streptophyta</taxon>
        <taxon>Embryophyta</taxon>
        <taxon>Tracheophyta</taxon>
        <taxon>Spermatophyta</taxon>
        <taxon>Magnoliopsida</taxon>
        <taxon>eudicotyledons</taxon>
        <taxon>Gunneridae</taxon>
        <taxon>Pentapetalae</taxon>
        <taxon>rosids</taxon>
        <taxon>fabids</taxon>
        <taxon>Malpighiales</taxon>
        <taxon>Violaceae</taxon>
        <taxon>Viola</taxon>
        <taxon>Viola subgen. Viola</taxon>
        <taxon>Viola sect. Melanium</taxon>
        <taxon>Viola subsect. Bracteolatae</taxon>
    </lineage>
</organism>
<proteinExistence type="evidence at protein level"/>
<sequence length="29" mass="2902">GLPVCGETCVGGTCNTPGCSCSWPVCTRN</sequence>
<feature type="peptide" id="PRO_0000043632" description="Varv peptide A">
    <location>
        <begin position="1"/>
        <end position="29"/>
    </location>
</feature>
<feature type="disulfide bond">
    <location>
        <begin position="5"/>
        <end position="19"/>
    </location>
</feature>
<feature type="disulfide bond">
    <location>
        <begin position="9"/>
        <end position="21"/>
    </location>
</feature>
<feature type="disulfide bond">
    <location>
        <begin position="14"/>
        <end position="26"/>
    </location>
</feature>
<feature type="cross-link" description="Cyclopeptide (Gly-Asn)">
    <location>
        <begin position="1"/>
        <end position="29"/>
    </location>
</feature>